<comment type="similarity">
    <text evidence="1">Belongs to the bacterial ribosomal protein bL27 family.</text>
</comment>
<reference key="1">
    <citation type="journal article" date="2005" name="BMC Genomics">
        <title>Bacterial genome adaptation to niches: divergence of the potential virulence genes in three Burkholderia species of different survival strategies.</title>
        <authorList>
            <person name="Kim H.S."/>
            <person name="Schell M.A."/>
            <person name="Yu Y."/>
            <person name="Ulrich R.L."/>
            <person name="Sarria S.H."/>
            <person name="Nierman W.C."/>
            <person name="DeShazer D."/>
        </authorList>
    </citation>
    <scope>NUCLEOTIDE SEQUENCE [LARGE SCALE GENOMIC DNA]</scope>
    <source>
        <strain>ATCC 700388 / DSM 13276 / CCUG 48851 / CIP 106301 / E264</strain>
    </source>
</reference>
<name>RL27_BURTA</name>
<keyword id="KW-0687">Ribonucleoprotein</keyword>
<keyword id="KW-0689">Ribosomal protein</keyword>
<gene>
    <name evidence="1" type="primary">rpmA</name>
    <name type="ordered locus">BTH_I1141</name>
</gene>
<protein>
    <recommendedName>
        <fullName evidence="1">Large ribosomal subunit protein bL27</fullName>
    </recommendedName>
    <alternativeName>
        <fullName evidence="3">50S ribosomal protein L27</fullName>
    </alternativeName>
</protein>
<organism>
    <name type="scientific">Burkholderia thailandensis (strain ATCC 700388 / DSM 13276 / CCUG 48851 / CIP 106301 / E264)</name>
    <dbReference type="NCBI Taxonomy" id="271848"/>
    <lineage>
        <taxon>Bacteria</taxon>
        <taxon>Pseudomonadati</taxon>
        <taxon>Pseudomonadota</taxon>
        <taxon>Betaproteobacteria</taxon>
        <taxon>Burkholderiales</taxon>
        <taxon>Burkholderiaceae</taxon>
        <taxon>Burkholderia</taxon>
        <taxon>pseudomallei group</taxon>
    </lineage>
</organism>
<accession>Q2SZG1</accession>
<evidence type="ECO:0000255" key="1">
    <source>
        <dbReference type="HAMAP-Rule" id="MF_00539"/>
    </source>
</evidence>
<evidence type="ECO:0000256" key="2">
    <source>
        <dbReference type="SAM" id="MobiDB-lite"/>
    </source>
</evidence>
<evidence type="ECO:0000305" key="3"/>
<proteinExistence type="inferred from homology"/>
<dbReference type="EMBL" id="CP000086">
    <property type="protein sequence ID" value="ABC37927.1"/>
    <property type="molecule type" value="Genomic_DNA"/>
</dbReference>
<dbReference type="RefSeq" id="WP_004194025.1">
    <property type="nucleotide sequence ID" value="NZ_CP008785.1"/>
</dbReference>
<dbReference type="SMR" id="Q2SZG1"/>
<dbReference type="GeneID" id="93061604"/>
<dbReference type="KEGG" id="bte:BTH_I1141"/>
<dbReference type="HOGENOM" id="CLU_095424_4_1_4"/>
<dbReference type="Proteomes" id="UP000001930">
    <property type="component" value="Chromosome I"/>
</dbReference>
<dbReference type="GO" id="GO:0022625">
    <property type="term" value="C:cytosolic large ribosomal subunit"/>
    <property type="evidence" value="ECO:0007669"/>
    <property type="project" value="TreeGrafter"/>
</dbReference>
<dbReference type="GO" id="GO:0003735">
    <property type="term" value="F:structural constituent of ribosome"/>
    <property type="evidence" value="ECO:0007669"/>
    <property type="project" value="InterPro"/>
</dbReference>
<dbReference type="GO" id="GO:0006412">
    <property type="term" value="P:translation"/>
    <property type="evidence" value="ECO:0007669"/>
    <property type="project" value="UniProtKB-UniRule"/>
</dbReference>
<dbReference type="FunFam" id="2.40.50.100:FF:000001">
    <property type="entry name" value="50S ribosomal protein L27"/>
    <property type="match status" value="1"/>
</dbReference>
<dbReference type="Gene3D" id="2.40.50.100">
    <property type="match status" value="1"/>
</dbReference>
<dbReference type="HAMAP" id="MF_00539">
    <property type="entry name" value="Ribosomal_bL27"/>
    <property type="match status" value="1"/>
</dbReference>
<dbReference type="InterPro" id="IPR001684">
    <property type="entry name" value="Ribosomal_bL27"/>
</dbReference>
<dbReference type="InterPro" id="IPR018261">
    <property type="entry name" value="Ribosomal_bL27_CS"/>
</dbReference>
<dbReference type="NCBIfam" id="TIGR00062">
    <property type="entry name" value="L27"/>
    <property type="match status" value="1"/>
</dbReference>
<dbReference type="PANTHER" id="PTHR15893:SF0">
    <property type="entry name" value="LARGE RIBOSOMAL SUBUNIT PROTEIN BL27M"/>
    <property type="match status" value="1"/>
</dbReference>
<dbReference type="PANTHER" id="PTHR15893">
    <property type="entry name" value="RIBOSOMAL PROTEIN L27"/>
    <property type="match status" value="1"/>
</dbReference>
<dbReference type="Pfam" id="PF01016">
    <property type="entry name" value="Ribosomal_L27"/>
    <property type="match status" value="1"/>
</dbReference>
<dbReference type="PRINTS" id="PR00063">
    <property type="entry name" value="RIBOSOMALL27"/>
</dbReference>
<dbReference type="SUPFAM" id="SSF110324">
    <property type="entry name" value="Ribosomal L27 protein-like"/>
    <property type="match status" value="1"/>
</dbReference>
<dbReference type="PROSITE" id="PS00831">
    <property type="entry name" value="RIBOSOMAL_L27"/>
    <property type="match status" value="1"/>
</dbReference>
<sequence>MAHKKAGGSSRNGRDSESKRLGVKVYGGQAINAGGIIVRQRGTRMHAGENVGMGKDHTLFALVDGHVKFTTKGAAKKHTVVVVPAAA</sequence>
<feature type="chain" id="PRO_1000017436" description="Large ribosomal subunit protein bL27">
    <location>
        <begin position="1"/>
        <end position="87"/>
    </location>
</feature>
<feature type="region of interest" description="Disordered" evidence="2">
    <location>
        <begin position="1"/>
        <end position="21"/>
    </location>
</feature>